<organism>
    <name type="scientific">Shewanella baltica (strain OS155 / ATCC BAA-1091)</name>
    <dbReference type="NCBI Taxonomy" id="325240"/>
    <lineage>
        <taxon>Bacteria</taxon>
        <taxon>Pseudomonadati</taxon>
        <taxon>Pseudomonadota</taxon>
        <taxon>Gammaproteobacteria</taxon>
        <taxon>Alteromonadales</taxon>
        <taxon>Shewanellaceae</taxon>
        <taxon>Shewanella</taxon>
    </lineage>
</organism>
<protein>
    <recommendedName>
        <fullName evidence="1">Na(+)/H(+) antiporter NhaA</fullName>
    </recommendedName>
    <alternativeName>
        <fullName evidence="1">Sodium/proton antiporter NhaA</fullName>
    </alternativeName>
</protein>
<proteinExistence type="inferred from homology"/>
<comment type="function">
    <text evidence="1">Na(+)/H(+) antiporter that extrudes sodium in exchange for external protons.</text>
</comment>
<comment type="catalytic activity">
    <reaction evidence="1">
        <text>Na(+)(in) + 2 H(+)(out) = Na(+)(out) + 2 H(+)(in)</text>
        <dbReference type="Rhea" id="RHEA:29251"/>
        <dbReference type="ChEBI" id="CHEBI:15378"/>
        <dbReference type="ChEBI" id="CHEBI:29101"/>
    </reaction>
    <physiologicalReaction direction="left-to-right" evidence="1">
        <dbReference type="Rhea" id="RHEA:29252"/>
    </physiologicalReaction>
</comment>
<comment type="subcellular location">
    <subcellularLocation>
        <location evidence="1">Cell inner membrane</location>
        <topology evidence="1">Multi-pass membrane protein</topology>
    </subcellularLocation>
</comment>
<comment type="similarity">
    <text evidence="1">Belongs to the NhaA Na(+)/H(+) (TC 2.A.33) antiporter family.</text>
</comment>
<dbReference type="EMBL" id="CP000563">
    <property type="protein sequence ID" value="ABN60707.1"/>
    <property type="molecule type" value="Genomic_DNA"/>
</dbReference>
<dbReference type="RefSeq" id="WP_011846162.1">
    <property type="nucleotide sequence ID" value="NC_009052.1"/>
</dbReference>
<dbReference type="SMR" id="A3D1U4"/>
<dbReference type="STRING" id="325240.Sbal_1189"/>
<dbReference type="KEGG" id="sbl:Sbal_1189"/>
<dbReference type="HOGENOM" id="CLU_015803_1_0_6"/>
<dbReference type="OrthoDB" id="9808135at2"/>
<dbReference type="Proteomes" id="UP000001557">
    <property type="component" value="Chromosome"/>
</dbReference>
<dbReference type="GO" id="GO:0005886">
    <property type="term" value="C:plasma membrane"/>
    <property type="evidence" value="ECO:0007669"/>
    <property type="project" value="UniProtKB-SubCell"/>
</dbReference>
<dbReference type="GO" id="GO:0015385">
    <property type="term" value="F:sodium:proton antiporter activity"/>
    <property type="evidence" value="ECO:0007669"/>
    <property type="project" value="TreeGrafter"/>
</dbReference>
<dbReference type="GO" id="GO:0006885">
    <property type="term" value="P:regulation of pH"/>
    <property type="evidence" value="ECO:0007669"/>
    <property type="project" value="InterPro"/>
</dbReference>
<dbReference type="Gene3D" id="1.20.1530.10">
    <property type="entry name" value="Na+/H+ antiporter like domain"/>
    <property type="match status" value="1"/>
</dbReference>
<dbReference type="HAMAP" id="MF_01844">
    <property type="entry name" value="NhaA"/>
    <property type="match status" value="1"/>
</dbReference>
<dbReference type="InterPro" id="IPR023171">
    <property type="entry name" value="Na/H_antiporter_dom_sf"/>
</dbReference>
<dbReference type="InterPro" id="IPR004670">
    <property type="entry name" value="NhaA"/>
</dbReference>
<dbReference type="NCBIfam" id="TIGR00773">
    <property type="entry name" value="NhaA"/>
    <property type="match status" value="1"/>
</dbReference>
<dbReference type="NCBIfam" id="NF007111">
    <property type="entry name" value="PRK09560.1"/>
    <property type="match status" value="1"/>
</dbReference>
<dbReference type="NCBIfam" id="NF007112">
    <property type="entry name" value="PRK09561.1"/>
    <property type="match status" value="1"/>
</dbReference>
<dbReference type="PANTHER" id="PTHR30341:SF0">
    <property type="entry name" value="NA(+)_H(+) ANTIPORTER NHAA"/>
    <property type="match status" value="1"/>
</dbReference>
<dbReference type="PANTHER" id="PTHR30341">
    <property type="entry name" value="SODIUM ION/PROTON ANTIPORTER NHAA-RELATED"/>
    <property type="match status" value="1"/>
</dbReference>
<dbReference type="Pfam" id="PF06965">
    <property type="entry name" value="Na_H_antiport_1"/>
    <property type="match status" value="1"/>
</dbReference>
<gene>
    <name evidence="1" type="primary">nhaA</name>
    <name type="ordered locus">Sbal_1189</name>
</gene>
<evidence type="ECO:0000255" key="1">
    <source>
        <dbReference type="HAMAP-Rule" id="MF_01844"/>
    </source>
</evidence>
<reference key="1">
    <citation type="submission" date="2007-02" db="EMBL/GenBank/DDBJ databases">
        <title>Complete sequence of chromosome of Shewanella baltica OS155.</title>
        <authorList>
            <consortium name="US DOE Joint Genome Institute"/>
            <person name="Copeland A."/>
            <person name="Lucas S."/>
            <person name="Lapidus A."/>
            <person name="Barry K."/>
            <person name="Detter J.C."/>
            <person name="Glavina del Rio T."/>
            <person name="Hammon N."/>
            <person name="Israni S."/>
            <person name="Dalin E."/>
            <person name="Tice H."/>
            <person name="Pitluck S."/>
            <person name="Sims D.R."/>
            <person name="Brettin T."/>
            <person name="Bruce D."/>
            <person name="Han C."/>
            <person name="Tapia R."/>
            <person name="Brainard J."/>
            <person name="Schmutz J."/>
            <person name="Larimer F."/>
            <person name="Land M."/>
            <person name="Hauser L."/>
            <person name="Kyrpides N."/>
            <person name="Mikhailova N."/>
            <person name="Brettar I."/>
            <person name="Klappenbach J."/>
            <person name="Konstantinidis K."/>
            <person name="Rodrigues J."/>
            <person name="Tiedje J."/>
            <person name="Richardson P."/>
        </authorList>
    </citation>
    <scope>NUCLEOTIDE SEQUENCE [LARGE SCALE GENOMIC DNA]</scope>
    <source>
        <strain>OS155 / ATCC BAA-1091</strain>
    </source>
</reference>
<sequence length="389" mass="40864">MEKAIRNFLSQESAGGILLLVAVALAMLMANSPLSGLYQGFLGTDVQVKIGELDIHKPLILWINDGLMAVFFLLIGLEVKRELLEGALSSVAQASLPTFAAIGGMLVPAGVYLLFNYGDPVTQAGWAIPAATDIAFALGIMALLGSRVPVSLKVFLLALAIIDDLGVIVIIALFYSTDLSTISLVIASLAIAGLVGLNRKGVTSLLPYSILGLILWVAVLKSGVHATLAGVIIAFCIPLRAKDGSSPSEGLEHSLHPWSTFFILPVFAFANAGVYVGNMNLETLISPVPVGIALGLMLGKPIGVMVFSYIAVKLKLAQLPDGVGWKQIAPVAAMCGIGFTMSMFIASLAFEHADPMYGDLARLGTLIGSIMAALVGYFWLSKVLPNKGV</sequence>
<accession>A3D1U4</accession>
<keyword id="KW-0050">Antiport</keyword>
<keyword id="KW-0997">Cell inner membrane</keyword>
<keyword id="KW-1003">Cell membrane</keyword>
<keyword id="KW-0406">Ion transport</keyword>
<keyword id="KW-0472">Membrane</keyword>
<keyword id="KW-1185">Reference proteome</keyword>
<keyword id="KW-0915">Sodium</keyword>
<keyword id="KW-0739">Sodium transport</keyword>
<keyword id="KW-0812">Transmembrane</keyword>
<keyword id="KW-1133">Transmembrane helix</keyword>
<keyword id="KW-0813">Transport</keyword>
<feature type="chain" id="PRO_0000334420" description="Na(+)/H(+) antiporter NhaA">
    <location>
        <begin position="1"/>
        <end position="389"/>
    </location>
</feature>
<feature type="transmembrane region" description="Helical" evidence="1">
    <location>
        <begin position="14"/>
        <end position="34"/>
    </location>
</feature>
<feature type="transmembrane region" description="Helical" evidence="1">
    <location>
        <begin position="59"/>
        <end position="79"/>
    </location>
</feature>
<feature type="transmembrane region" description="Helical" evidence="1">
    <location>
        <begin position="95"/>
        <end position="115"/>
    </location>
</feature>
<feature type="transmembrane region" description="Helical" evidence="1">
    <location>
        <begin position="124"/>
        <end position="144"/>
    </location>
</feature>
<feature type="transmembrane region" description="Helical" evidence="1">
    <location>
        <begin position="154"/>
        <end position="174"/>
    </location>
</feature>
<feature type="transmembrane region" description="Helical" evidence="1">
    <location>
        <begin position="177"/>
        <end position="197"/>
    </location>
</feature>
<feature type="transmembrane region" description="Helical" evidence="1">
    <location>
        <begin position="213"/>
        <end position="233"/>
    </location>
</feature>
<feature type="transmembrane region" description="Helical" evidence="1">
    <location>
        <begin position="257"/>
        <end position="277"/>
    </location>
</feature>
<feature type="transmembrane region" description="Helical" evidence="1">
    <location>
        <begin position="292"/>
        <end position="312"/>
    </location>
</feature>
<feature type="transmembrane region" description="Helical" evidence="1">
    <location>
        <begin position="328"/>
        <end position="348"/>
    </location>
</feature>
<feature type="transmembrane region" description="Helical" evidence="1">
    <location>
        <begin position="363"/>
        <end position="383"/>
    </location>
</feature>
<name>NHAA_SHEB5</name>